<evidence type="ECO:0000255" key="1">
    <source>
        <dbReference type="HAMAP-Rule" id="MF_01807"/>
    </source>
</evidence>
<evidence type="ECO:0000255" key="2">
    <source>
        <dbReference type="PROSITE-ProRule" id="PRU01246"/>
    </source>
</evidence>
<evidence type="ECO:0000255" key="3">
    <source>
        <dbReference type="PROSITE-ProRule" id="PRU01248"/>
    </source>
</evidence>
<dbReference type="EMBL" id="AP008934">
    <property type="protein sequence ID" value="BAE18400.1"/>
    <property type="molecule type" value="Genomic_DNA"/>
</dbReference>
<dbReference type="RefSeq" id="WP_002483230.1">
    <property type="nucleotide sequence ID" value="NZ_MTGA01000038.1"/>
</dbReference>
<dbReference type="SMR" id="Q49XU5"/>
<dbReference type="GeneID" id="3616885"/>
<dbReference type="KEGG" id="ssp:SSP1255"/>
<dbReference type="eggNOG" id="COG4974">
    <property type="taxonomic scope" value="Bacteria"/>
</dbReference>
<dbReference type="HOGENOM" id="CLU_027562_9_6_9"/>
<dbReference type="OrthoDB" id="9801717at2"/>
<dbReference type="Proteomes" id="UP000006371">
    <property type="component" value="Chromosome"/>
</dbReference>
<dbReference type="GO" id="GO:0005737">
    <property type="term" value="C:cytoplasm"/>
    <property type="evidence" value="ECO:0007669"/>
    <property type="project" value="UniProtKB-SubCell"/>
</dbReference>
<dbReference type="GO" id="GO:0003677">
    <property type="term" value="F:DNA binding"/>
    <property type="evidence" value="ECO:0007669"/>
    <property type="project" value="UniProtKB-KW"/>
</dbReference>
<dbReference type="GO" id="GO:0009037">
    <property type="term" value="F:tyrosine-based site-specific recombinase activity"/>
    <property type="evidence" value="ECO:0007669"/>
    <property type="project" value="UniProtKB-UniRule"/>
</dbReference>
<dbReference type="GO" id="GO:0051301">
    <property type="term" value="P:cell division"/>
    <property type="evidence" value="ECO:0007669"/>
    <property type="project" value="UniProtKB-KW"/>
</dbReference>
<dbReference type="GO" id="GO:0007059">
    <property type="term" value="P:chromosome segregation"/>
    <property type="evidence" value="ECO:0007669"/>
    <property type="project" value="UniProtKB-UniRule"/>
</dbReference>
<dbReference type="GO" id="GO:0006313">
    <property type="term" value="P:DNA transposition"/>
    <property type="evidence" value="ECO:0007669"/>
    <property type="project" value="UniProtKB-UniRule"/>
</dbReference>
<dbReference type="CDD" id="cd00798">
    <property type="entry name" value="INT_XerDC_C"/>
    <property type="match status" value="1"/>
</dbReference>
<dbReference type="Gene3D" id="1.10.150.130">
    <property type="match status" value="1"/>
</dbReference>
<dbReference type="Gene3D" id="1.10.443.10">
    <property type="entry name" value="Intergrase catalytic core"/>
    <property type="match status" value="1"/>
</dbReference>
<dbReference type="HAMAP" id="MF_01808">
    <property type="entry name" value="Recomb_XerC_XerD"/>
    <property type="match status" value="1"/>
</dbReference>
<dbReference type="HAMAP" id="MF_01807">
    <property type="entry name" value="Recomb_XerD"/>
    <property type="match status" value="1"/>
</dbReference>
<dbReference type="InterPro" id="IPR044068">
    <property type="entry name" value="CB"/>
</dbReference>
<dbReference type="InterPro" id="IPR011010">
    <property type="entry name" value="DNA_brk_join_enz"/>
</dbReference>
<dbReference type="InterPro" id="IPR013762">
    <property type="entry name" value="Integrase-like_cat_sf"/>
</dbReference>
<dbReference type="InterPro" id="IPR002104">
    <property type="entry name" value="Integrase_catalytic"/>
</dbReference>
<dbReference type="InterPro" id="IPR010998">
    <property type="entry name" value="Integrase_recombinase_N"/>
</dbReference>
<dbReference type="InterPro" id="IPR004107">
    <property type="entry name" value="Integrase_SAM-like_N"/>
</dbReference>
<dbReference type="InterPro" id="IPR011932">
    <property type="entry name" value="Recomb_XerD"/>
</dbReference>
<dbReference type="InterPro" id="IPR023009">
    <property type="entry name" value="Tyrosine_recombinase_XerC/XerD"/>
</dbReference>
<dbReference type="InterPro" id="IPR050090">
    <property type="entry name" value="Tyrosine_recombinase_XerCD"/>
</dbReference>
<dbReference type="NCBIfam" id="NF001399">
    <property type="entry name" value="PRK00283.1"/>
    <property type="match status" value="1"/>
</dbReference>
<dbReference type="NCBIfam" id="NF040815">
    <property type="entry name" value="recomb_XerA_Arch"/>
    <property type="match status" value="1"/>
</dbReference>
<dbReference type="NCBIfam" id="TIGR02225">
    <property type="entry name" value="recomb_XerD"/>
    <property type="match status" value="1"/>
</dbReference>
<dbReference type="PANTHER" id="PTHR30349">
    <property type="entry name" value="PHAGE INTEGRASE-RELATED"/>
    <property type="match status" value="1"/>
</dbReference>
<dbReference type="PANTHER" id="PTHR30349:SF81">
    <property type="entry name" value="TYROSINE RECOMBINASE XERC"/>
    <property type="match status" value="1"/>
</dbReference>
<dbReference type="Pfam" id="PF02899">
    <property type="entry name" value="Phage_int_SAM_1"/>
    <property type="match status" value="1"/>
</dbReference>
<dbReference type="Pfam" id="PF00589">
    <property type="entry name" value="Phage_integrase"/>
    <property type="match status" value="1"/>
</dbReference>
<dbReference type="SUPFAM" id="SSF56349">
    <property type="entry name" value="DNA breaking-rejoining enzymes"/>
    <property type="match status" value="1"/>
</dbReference>
<dbReference type="PROSITE" id="PS51900">
    <property type="entry name" value="CB"/>
    <property type="match status" value="1"/>
</dbReference>
<dbReference type="PROSITE" id="PS51898">
    <property type="entry name" value="TYR_RECOMBINASE"/>
    <property type="match status" value="1"/>
</dbReference>
<accession>Q49XU5</accession>
<keyword id="KW-0131">Cell cycle</keyword>
<keyword id="KW-0132">Cell division</keyword>
<keyword id="KW-0159">Chromosome partition</keyword>
<keyword id="KW-0963">Cytoplasm</keyword>
<keyword id="KW-0229">DNA integration</keyword>
<keyword id="KW-0233">DNA recombination</keyword>
<keyword id="KW-0238">DNA-binding</keyword>
<keyword id="KW-1185">Reference proteome</keyword>
<reference key="1">
    <citation type="journal article" date="2005" name="Proc. Natl. Acad. Sci. U.S.A.">
        <title>Whole genome sequence of Staphylococcus saprophyticus reveals the pathogenesis of uncomplicated urinary tract infection.</title>
        <authorList>
            <person name="Kuroda M."/>
            <person name="Yamashita A."/>
            <person name="Hirakawa H."/>
            <person name="Kumano M."/>
            <person name="Morikawa K."/>
            <person name="Higashide M."/>
            <person name="Maruyama A."/>
            <person name="Inose Y."/>
            <person name="Matoba K."/>
            <person name="Toh H."/>
            <person name="Kuhara S."/>
            <person name="Hattori M."/>
            <person name="Ohta T."/>
        </authorList>
    </citation>
    <scope>NUCLEOTIDE SEQUENCE [LARGE SCALE GENOMIC DNA]</scope>
    <source>
        <strain>ATCC 15305 / DSM 20229 / NCIMB 8711 / NCTC 7292 / S-41</strain>
    </source>
</reference>
<proteinExistence type="inferred from homology"/>
<protein>
    <recommendedName>
        <fullName evidence="1">Tyrosine recombinase XerD</fullName>
    </recommendedName>
</protein>
<comment type="function">
    <text evidence="1">Site-specific tyrosine recombinase, which acts by catalyzing the cutting and rejoining of the recombining DNA molecules. The XerC-XerD complex is essential to convert dimers of the bacterial chromosome into monomers to permit their segregation at cell division. It also contributes to the segregational stability of plasmids.</text>
</comment>
<comment type="subunit">
    <text evidence="1">Forms a cyclic heterotetrameric complex composed of two molecules of XerC and two molecules of XerD.</text>
</comment>
<comment type="subcellular location">
    <subcellularLocation>
        <location evidence="1">Cytoplasm</location>
    </subcellularLocation>
</comment>
<comment type="similarity">
    <text evidence="1">Belongs to the 'phage' integrase family. XerD subfamily.</text>
</comment>
<name>XERD_STAS1</name>
<gene>
    <name evidence="1" type="primary">xerD</name>
    <name type="ordered locus">SSP1255</name>
</gene>
<sequence>MDTIIEEYLKFIQLEKGLSSNTIGAYRRDLKKYNTFLELQKISHIDFIDRASIQQCLGYLHDNGASAKSLARFISTIRSFHQFALREKYAAKDPTVLIETPKYDRKLPDVLEINEVLALLETPNLAKINGYRDRTMLELLYATGMRVSELIQIELEDVNLIMGFVKVFGKGNKERIVPLGDTVIEYLKTYIETIRPQLLKKTVTNTLFLNMHGKPLSRQAIWKMIKQNAIKANITKSLTPHTLRHSFATHLLENGADLRAVQEMLGHSDISTTQLYTHVSKSQIRKMYNEFHPRA</sequence>
<organism>
    <name type="scientific">Staphylococcus saprophyticus subsp. saprophyticus (strain ATCC 15305 / DSM 20229 / NCIMB 8711 / NCTC 7292 / S-41)</name>
    <dbReference type="NCBI Taxonomy" id="342451"/>
    <lineage>
        <taxon>Bacteria</taxon>
        <taxon>Bacillati</taxon>
        <taxon>Bacillota</taxon>
        <taxon>Bacilli</taxon>
        <taxon>Bacillales</taxon>
        <taxon>Staphylococcaceae</taxon>
        <taxon>Staphylococcus</taxon>
    </lineage>
</organism>
<feature type="chain" id="PRO_0000095426" description="Tyrosine recombinase XerD">
    <location>
        <begin position="1"/>
        <end position="295"/>
    </location>
</feature>
<feature type="domain" description="Core-binding (CB)" evidence="3">
    <location>
        <begin position="1"/>
        <end position="85"/>
    </location>
</feature>
<feature type="domain" description="Tyr recombinase" evidence="2">
    <location>
        <begin position="106"/>
        <end position="289"/>
    </location>
</feature>
<feature type="active site" evidence="1">
    <location>
        <position position="146"/>
    </location>
</feature>
<feature type="active site" evidence="1">
    <location>
        <position position="170"/>
    </location>
</feature>
<feature type="active site" evidence="1">
    <location>
        <position position="241"/>
    </location>
</feature>
<feature type="active site" evidence="1">
    <location>
        <position position="244"/>
    </location>
</feature>
<feature type="active site" evidence="1">
    <location>
        <position position="267"/>
    </location>
</feature>
<feature type="active site" description="O-(3'-phospho-DNA)-tyrosine intermediate" evidence="1">
    <location>
        <position position="276"/>
    </location>
</feature>